<dbReference type="EC" id="2.7.7.56" evidence="1"/>
<dbReference type="EMBL" id="CP000911">
    <property type="protein sequence ID" value="ABY37276.1"/>
    <property type="molecule type" value="Genomic_DNA"/>
</dbReference>
<dbReference type="RefSeq" id="WP_002965421.1">
    <property type="nucleotide sequence ID" value="NC_010169.1"/>
</dbReference>
<dbReference type="SMR" id="B0CJ32"/>
<dbReference type="GeneID" id="97534418"/>
<dbReference type="KEGG" id="bmt:BSUIS_A0174"/>
<dbReference type="HOGENOM" id="CLU_050858_0_0_5"/>
<dbReference type="Proteomes" id="UP000008545">
    <property type="component" value="Chromosome I"/>
</dbReference>
<dbReference type="GO" id="GO:0000175">
    <property type="term" value="F:3'-5'-RNA exonuclease activity"/>
    <property type="evidence" value="ECO:0007669"/>
    <property type="project" value="UniProtKB-UniRule"/>
</dbReference>
<dbReference type="GO" id="GO:0000049">
    <property type="term" value="F:tRNA binding"/>
    <property type="evidence" value="ECO:0007669"/>
    <property type="project" value="UniProtKB-UniRule"/>
</dbReference>
<dbReference type="GO" id="GO:0009022">
    <property type="term" value="F:tRNA nucleotidyltransferase activity"/>
    <property type="evidence" value="ECO:0007669"/>
    <property type="project" value="UniProtKB-UniRule"/>
</dbReference>
<dbReference type="GO" id="GO:0016075">
    <property type="term" value="P:rRNA catabolic process"/>
    <property type="evidence" value="ECO:0007669"/>
    <property type="project" value="UniProtKB-UniRule"/>
</dbReference>
<dbReference type="GO" id="GO:0006364">
    <property type="term" value="P:rRNA processing"/>
    <property type="evidence" value="ECO:0007669"/>
    <property type="project" value="UniProtKB-KW"/>
</dbReference>
<dbReference type="GO" id="GO:0008033">
    <property type="term" value="P:tRNA processing"/>
    <property type="evidence" value="ECO:0007669"/>
    <property type="project" value="UniProtKB-UniRule"/>
</dbReference>
<dbReference type="CDD" id="cd11362">
    <property type="entry name" value="RNase_PH_bact"/>
    <property type="match status" value="1"/>
</dbReference>
<dbReference type="FunFam" id="3.30.230.70:FF:000003">
    <property type="entry name" value="Ribonuclease PH"/>
    <property type="match status" value="1"/>
</dbReference>
<dbReference type="Gene3D" id="3.30.230.70">
    <property type="entry name" value="GHMP Kinase, N-terminal domain"/>
    <property type="match status" value="1"/>
</dbReference>
<dbReference type="HAMAP" id="MF_00564">
    <property type="entry name" value="RNase_PH"/>
    <property type="match status" value="1"/>
</dbReference>
<dbReference type="InterPro" id="IPR001247">
    <property type="entry name" value="ExoRNase_PH_dom1"/>
</dbReference>
<dbReference type="InterPro" id="IPR015847">
    <property type="entry name" value="ExoRNase_PH_dom2"/>
</dbReference>
<dbReference type="InterPro" id="IPR036345">
    <property type="entry name" value="ExoRNase_PH_dom2_sf"/>
</dbReference>
<dbReference type="InterPro" id="IPR027408">
    <property type="entry name" value="PNPase/RNase_PH_dom_sf"/>
</dbReference>
<dbReference type="InterPro" id="IPR020568">
    <property type="entry name" value="Ribosomal_Su5_D2-typ_SF"/>
</dbReference>
<dbReference type="InterPro" id="IPR050080">
    <property type="entry name" value="RNase_PH"/>
</dbReference>
<dbReference type="InterPro" id="IPR002381">
    <property type="entry name" value="RNase_PH_bac-type"/>
</dbReference>
<dbReference type="InterPro" id="IPR018336">
    <property type="entry name" value="RNase_PH_CS"/>
</dbReference>
<dbReference type="NCBIfam" id="TIGR01966">
    <property type="entry name" value="RNasePH"/>
    <property type="match status" value="1"/>
</dbReference>
<dbReference type="PANTHER" id="PTHR11953">
    <property type="entry name" value="EXOSOME COMPLEX COMPONENT"/>
    <property type="match status" value="1"/>
</dbReference>
<dbReference type="PANTHER" id="PTHR11953:SF0">
    <property type="entry name" value="EXOSOME COMPLEX COMPONENT RRP41"/>
    <property type="match status" value="1"/>
</dbReference>
<dbReference type="Pfam" id="PF01138">
    <property type="entry name" value="RNase_PH"/>
    <property type="match status" value="1"/>
</dbReference>
<dbReference type="Pfam" id="PF03725">
    <property type="entry name" value="RNase_PH_C"/>
    <property type="match status" value="1"/>
</dbReference>
<dbReference type="SUPFAM" id="SSF55666">
    <property type="entry name" value="Ribonuclease PH domain 2-like"/>
    <property type="match status" value="1"/>
</dbReference>
<dbReference type="SUPFAM" id="SSF54211">
    <property type="entry name" value="Ribosomal protein S5 domain 2-like"/>
    <property type="match status" value="1"/>
</dbReference>
<dbReference type="PROSITE" id="PS01277">
    <property type="entry name" value="RIBONUCLEASE_PH"/>
    <property type="match status" value="1"/>
</dbReference>
<evidence type="ECO:0000255" key="1">
    <source>
        <dbReference type="HAMAP-Rule" id="MF_00564"/>
    </source>
</evidence>
<feature type="chain" id="PRO_1000082284" description="Ribonuclease PH">
    <location>
        <begin position="1"/>
        <end position="238"/>
    </location>
</feature>
<feature type="binding site" evidence="1">
    <location>
        <position position="86"/>
    </location>
    <ligand>
        <name>phosphate</name>
        <dbReference type="ChEBI" id="CHEBI:43474"/>
        <note>substrate</note>
    </ligand>
</feature>
<feature type="binding site" evidence="1">
    <location>
        <begin position="124"/>
        <end position="126"/>
    </location>
    <ligand>
        <name>phosphate</name>
        <dbReference type="ChEBI" id="CHEBI:43474"/>
        <note>substrate</note>
    </ligand>
</feature>
<gene>
    <name evidence="1" type="primary">rph</name>
    <name type="ordered locus">BSUIS_A0174</name>
</gene>
<proteinExistence type="inferred from homology"/>
<name>RNPH_BRUSI</name>
<protein>
    <recommendedName>
        <fullName evidence="1">Ribonuclease PH</fullName>
        <shortName evidence="1">RNase PH</shortName>
        <ecNumber evidence="1">2.7.7.56</ecNumber>
    </recommendedName>
    <alternativeName>
        <fullName evidence="1">tRNA nucleotidyltransferase</fullName>
    </alternativeName>
</protein>
<organism>
    <name type="scientific">Brucella suis (strain ATCC 23445 / NCTC 10510)</name>
    <dbReference type="NCBI Taxonomy" id="470137"/>
    <lineage>
        <taxon>Bacteria</taxon>
        <taxon>Pseudomonadati</taxon>
        <taxon>Pseudomonadota</taxon>
        <taxon>Alphaproteobacteria</taxon>
        <taxon>Hyphomicrobiales</taxon>
        <taxon>Brucellaceae</taxon>
        <taxon>Brucella/Ochrobactrum group</taxon>
        <taxon>Brucella</taxon>
    </lineage>
</organism>
<accession>B0CJ32</accession>
<keyword id="KW-0548">Nucleotidyltransferase</keyword>
<keyword id="KW-0694">RNA-binding</keyword>
<keyword id="KW-0698">rRNA processing</keyword>
<keyword id="KW-0808">Transferase</keyword>
<keyword id="KW-0819">tRNA processing</keyword>
<keyword id="KW-0820">tRNA-binding</keyword>
<comment type="function">
    <text evidence="1">Phosphorolytic 3'-5' exoribonuclease that plays an important role in tRNA 3'-end maturation. Removes nucleotide residues following the 3'-CCA terminus of tRNAs; can also add nucleotides to the ends of RNA molecules by using nucleoside diphosphates as substrates, but this may not be physiologically important. Probably plays a role in initiation of 16S rRNA degradation (leading to ribosome degradation) during starvation.</text>
</comment>
<comment type="catalytic activity">
    <reaction evidence="1">
        <text>tRNA(n+1) + phosphate = tRNA(n) + a ribonucleoside 5'-diphosphate</text>
        <dbReference type="Rhea" id="RHEA:10628"/>
        <dbReference type="Rhea" id="RHEA-COMP:17343"/>
        <dbReference type="Rhea" id="RHEA-COMP:17344"/>
        <dbReference type="ChEBI" id="CHEBI:43474"/>
        <dbReference type="ChEBI" id="CHEBI:57930"/>
        <dbReference type="ChEBI" id="CHEBI:173114"/>
        <dbReference type="EC" id="2.7.7.56"/>
    </reaction>
</comment>
<comment type="subunit">
    <text evidence="1">Homohexameric ring arranged as a trimer of dimers.</text>
</comment>
<comment type="similarity">
    <text evidence="1">Belongs to the RNase PH family.</text>
</comment>
<sequence>MRPSKRAADEMRAISFERGVSKHAEGSCLVKFGDTHVLCTASLEEKVPGWMRNTGKGWVTAEYGMLPRSTGERMRREAAAGKQGGRTQEIQRLIGRSLRAVVDMQALGEMQITVDCDVIQADGGTRTAAITGGWVALHECLRWMEARQMVRVEKVLKDHVAAISCGIYEGVPVLDLDYAEDSVAETDSNFVMTGKGGIVEIQGTAEGVPFSEEEFGALMKLARSGIDRLVSLQKMAVA</sequence>
<reference key="1">
    <citation type="submission" date="2007-12" db="EMBL/GenBank/DDBJ databases">
        <title>Brucella suis ATCC 23445 whole genome shotgun sequencing project.</title>
        <authorList>
            <person name="Setubal J.C."/>
            <person name="Bowns C."/>
            <person name="Boyle S."/>
            <person name="Crasta O.R."/>
            <person name="Czar M.J."/>
            <person name="Dharmanolla C."/>
            <person name="Gillespie J.J."/>
            <person name="Kenyon R.W."/>
            <person name="Lu J."/>
            <person name="Mane S."/>
            <person name="Mohapatra S."/>
            <person name="Nagrani S."/>
            <person name="Purkayastha A."/>
            <person name="Rajasimha H.K."/>
            <person name="Shallom J.M."/>
            <person name="Shallom S."/>
            <person name="Shukla M."/>
            <person name="Snyder E.E."/>
            <person name="Sobral B.W."/>
            <person name="Wattam A.R."/>
            <person name="Will R."/>
            <person name="Williams K."/>
            <person name="Yoo H."/>
            <person name="Bruce D."/>
            <person name="Detter C."/>
            <person name="Munk C."/>
            <person name="Brettin T.S."/>
        </authorList>
    </citation>
    <scope>NUCLEOTIDE SEQUENCE [LARGE SCALE GENOMIC DNA]</scope>
    <source>
        <strain>ATCC 23445 / NCTC 10510</strain>
    </source>
</reference>